<feature type="chain" id="PRO_1000140550" description="Small ribosomal subunit protein uS8">
    <location>
        <begin position="1"/>
        <end position="130"/>
    </location>
</feature>
<reference key="1">
    <citation type="journal article" date="2009" name="PLoS Genet.">
        <title>Organised genome dynamics in the Escherichia coli species results in highly diverse adaptive paths.</title>
        <authorList>
            <person name="Touchon M."/>
            <person name="Hoede C."/>
            <person name="Tenaillon O."/>
            <person name="Barbe V."/>
            <person name="Baeriswyl S."/>
            <person name="Bidet P."/>
            <person name="Bingen E."/>
            <person name="Bonacorsi S."/>
            <person name="Bouchier C."/>
            <person name="Bouvet O."/>
            <person name="Calteau A."/>
            <person name="Chiapello H."/>
            <person name="Clermont O."/>
            <person name="Cruveiller S."/>
            <person name="Danchin A."/>
            <person name="Diard M."/>
            <person name="Dossat C."/>
            <person name="Karoui M.E."/>
            <person name="Frapy E."/>
            <person name="Garry L."/>
            <person name="Ghigo J.M."/>
            <person name="Gilles A.M."/>
            <person name="Johnson J."/>
            <person name="Le Bouguenec C."/>
            <person name="Lescat M."/>
            <person name="Mangenot S."/>
            <person name="Martinez-Jehanne V."/>
            <person name="Matic I."/>
            <person name="Nassif X."/>
            <person name="Oztas S."/>
            <person name="Petit M.A."/>
            <person name="Pichon C."/>
            <person name="Rouy Z."/>
            <person name="Ruf C.S."/>
            <person name="Schneider D."/>
            <person name="Tourret J."/>
            <person name="Vacherie B."/>
            <person name="Vallenet D."/>
            <person name="Medigue C."/>
            <person name="Rocha E.P.C."/>
            <person name="Denamur E."/>
        </authorList>
    </citation>
    <scope>NUCLEOTIDE SEQUENCE [LARGE SCALE GENOMIC DNA]</scope>
    <source>
        <strain>IAI1</strain>
    </source>
</reference>
<name>RS8_ECO8A</name>
<proteinExistence type="inferred from homology"/>
<organism>
    <name type="scientific">Escherichia coli O8 (strain IAI1)</name>
    <dbReference type="NCBI Taxonomy" id="585034"/>
    <lineage>
        <taxon>Bacteria</taxon>
        <taxon>Pseudomonadati</taxon>
        <taxon>Pseudomonadota</taxon>
        <taxon>Gammaproteobacteria</taxon>
        <taxon>Enterobacterales</taxon>
        <taxon>Enterobacteriaceae</taxon>
        <taxon>Escherichia</taxon>
    </lineage>
</organism>
<keyword id="KW-0687">Ribonucleoprotein</keyword>
<keyword id="KW-0689">Ribosomal protein</keyword>
<keyword id="KW-0694">RNA-binding</keyword>
<keyword id="KW-0699">rRNA-binding</keyword>
<evidence type="ECO:0000255" key="1">
    <source>
        <dbReference type="HAMAP-Rule" id="MF_01302"/>
    </source>
</evidence>
<evidence type="ECO:0000305" key="2"/>
<gene>
    <name evidence="1" type="primary">rpsH</name>
    <name type="ordered locus">ECIAI1_3455</name>
</gene>
<accession>B7M1M0</accession>
<sequence>MSMQDPIADMLTRIRNGQAANKAAVTMPSSKLKVAIANVLKEEGFIEDFKVEGDTKPELELTLKYFQGKAVVESIQRVSRPGLRIYKRKDELPKVMAGLGIAVVSTSKGVMTDRAARQAGLGGEIICYVA</sequence>
<comment type="function">
    <text evidence="1">One of the primary rRNA binding proteins, it binds directly to 16S rRNA central domain where it helps coordinate assembly of the platform of the 30S subunit.</text>
</comment>
<comment type="subunit">
    <text evidence="1">Part of the 30S ribosomal subunit. Contacts proteins S5 and S12.</text>
</comment>
<comment type="similarity">
    <text evidence="1">Belongs to the universal ribosomal protein uS8 family.</text>
</comment>
<dbReference type="EMBL" id="CU928160">
    <property type="protein sequence ID" value="CAR00257.1"/>
    <property type="molecule type" value="Genomic_DNA"/>
</dbReference>
<dbReference type="RefSeq" id="WP_000062611.1">
    <property type="nucleotide sequence ID" value="NC_011741.1"/>
</dbReference>
<dbReference type="SMR" id="B7M1M0"/>
<dbReference type="GeneID" id="93778681"/>
<dbReference type="KEGG" id="ecr:ECIAI1_3455"/>
<dbReference type="HOGENOM" id="CLU_098428_0_0_6"/>
<dbReference type="GO" id="GO:1990904">
    <property type="term" value="C:ribonucleoprotein complex"/>
    <property type="evidence" value="ECO:0007669"/>
    <property type="project" value="UniProtKB-KW"/>
</dbReference>
<dbReference type="GO" id="GO:0005840">
    <property type="term" value="C:ribosome"/>
    <property type="evidence" value="ECO:0007669"/>
    <property type="project" value="UniProtKB-KW"/>
</dbReference>
<dbReference type="GO" id="GO:0019843">
    <property type="term" value="F:rRNA binding"/>
    <property type="evidence" value="ECO:0007669"/>
    <property type="project" value="UniProtKB-UniRule"/>
</dbReference>
<dbReference type="GO" id="GO:0003735">
    <property type="term" value="F:structural constituent of ribosome"/>
    <property type="evidence" value="ECO:0007669"/>
    <property type="project" value="InterPro"/>
</dbReference>
<dbReference type="GO" id="GO:0006412">
    <property type="term" value="P:translation"/>
    <property type="evidence" value="ECO:0007669"/>
    <property type="project" value="UniProtKB-UniRule"/>
</dbReference>
<dbReference type="FunFam" id="3.30.1370.30:FF:000003">
    <property type="entry name" value="30S ribosomal protein S8"/>
    <property type="match status" value="1"/>
</dbReference>
<dbReference type="FunFam" id="3.30.1490.10:FF:000001">
    <property type="entry name" value="30S ribosomal protein S8"/>
    <property type="match status" value="1"/>
</dbReference>
<dbReference type="Gene3D" id="3.30.1370.30">
    <property type="match status" value="1"/>
</dbReference>
<dbReference type="Gene3D" id="3.30.1490.10">
    <property type="match status" value="1"/>
</dbReference>
<dbReference type="HAMAP" id="MF_01302_B">
    <property type="entry name" value="Ribosomal_uS8_B"/>
    <property type="match status" value="1"/>
</dbReference>
<dbReference type="InterPro" id="IPR000630">
    <property type="entry name" value="Ribosomal_uS8"/>
</dbReference>
<dbReference type="InterPro" id="IPR047863">
    <property type="entry name" value="Ribosomal_uS8_CS"/>
</dbReference>
<dbReference type="InterPro" id="IPR035987">
    <property type="entry name" value="Ribosomal_uS8_sf"/>
</dbReference>
<dbReference type="NCBIfam" id="NF001109">
    <property type="entry name" value="PRK00136.1"/>
    <property type="match status" value="1"/>
</dbReference>
<dbReference type="PANTHER" id="PTHR11758">
    <property type="entry name" value="40S RIBOSOMAL PROTEIN S15A"/>
    <property type="match status" value="1"/>
</dbReference>
<dbReference type="Pfam" id="PF00410">
    <property type="entry name" value="Ribosomal_S8"/>
    <property type="match status" value="1"/>
</dbReference>
<dbReference type="SUPFAM" id="SSF56047">
    <property type="entry name" value="Ribosomal protein S8"/>
    <property type="match status" value="1"/>
</dbReference>
<dbReference type="PROSITE" id="PS00053">
    <property type="entry name" value="RIBOSOMAL_S8"/>
    <property type="match status" value="1"/>
</dbReference>
<protein>
    <recommendedName>
        <fullName evidence="1">Small ribosomal subunit protein uS8</fullName>
    </recommendedName>
    <alternativeName>
        <fullName evidence="2">30S ribosomal protein S8</fullName>
    </alternativeName>
</protein>